<reference key="1">
    <citation type="journal article" date="2007" name="Mol. Plant Microbe Interact.">
        <title>Expression profiles of genes encoded by the supernumerary chromosome controlling AM-toxin biosynthesis and pathogenicity in the apple pathotype of Alternaria alternata.</title>
        <authorList>
            <person name="Harimoto Y."/>
            <person name="Hatta R."/>
            <person name="Kodama M."/>
            <person name="Yamamoto M."/>
            <person name="Otani H."/>
            <person name="Tsuge T."/>
        </authorList>
    </citation>
    <scope>NUCLEOTIDE SEQUENCE [GENOMIC DNA]</scope>
    <scope>INDUCTION</scope>
    <scope>PATHWAY</scope>
    <source>
        <strain>NBRC 8984</strain>
    </source>
</reference>
<reference key="2">
    <citation type="journal article" date="2000" name="Mol. Plant Microbe Interact.">
        <title>Cloning and characterization of a cyclic peptide synthetase gene from Alternaria alternata apple pathotype whose product is involved in AM-toxin synthesis and pathogenicity.</title>
        <authorList>
            <person name="Johnson R.D."/>
            <person name="Johnson L."/>
            <person name="Itoh Y."/>
            <person name="Kodama M."/>
            <person name="Otani H."/>
            <person name="Kohmoto K."/>
        </authorList>
    </citation>
    <scope>FUNCTION</scope>
    <source>
        <strain>M-71</strain>
    </source>
</reference>
<reference key="3">
    <citation type="journal article" date="2004" name="Mol. Microbiol.">
        <title>Dissection of the host range of the fungal plant pathogen Alternaria alternata by modification of secondary metabolism.</title>
        <authorList>
            <person name="Ito K."/>
            <person name="Tanaka T."/>
            <person name="Hatta R."/>
            <person name="Yamamoto M."/>
            <person name="Akimitsu K."/>
            <person name="Tsuge T."/>
        </authorList>
    </citation>
    <scope>FUNCTION</scope>
    <source>
        <strain>NBRC 8984</strain>
    </source>
</reference>
<reference key="4">
    <citation type="journal article" date="2013" name="FEMS Microbiol. Rev.">
        <title>Host-selective toxins produced by the plant pathogenic fungus Alternaria alternata.</title>
        <authorList>
            <person name="Tsuge T."/>
            <person name="Harimoto Y."/>
            <person name="Akimitsu K."/>
            <person name="Ohtani K."/>
            <person name="Kodama M."/>
            <person name="Akagi Y."/>
            <person name="Egusa M."/>
            <person name="Yamamoto M."/>
            <person name="Otani H."/>
        </authorList>
    </citation>
    <scope>REVIEW ON HOST-SELECTIVE TOXINS</scope>
</reference>
<gene>
    <name evidence="5" type="primary">AMT12</name>
</gene>
<keyword id="KW-0732">Signal</keyword>
<keyword id="KW-0843">Virulence</keyword>
<organism>
    <name type="scientific">Alternaria alternata</name>
    <name type="common">Alternaria rot fungus</name>
    <name type="synonym">Torula alternata</name>
    <dbReference type="NCBI Taxonomy" id="5599"/>
    <lineage>
        <taxon>Eukaryota</taxon>
        <taxon>Fungi</taxon>
        <taxon>Dikarya</taxon>
        <taxon>Ascomycota</taxon>
        <taxon>Pezizomycotina</taxon>
        <taxon>Dothideomycetes</taxon>
        <taxon>Pleosporomycetidae</taxon>
        <taxon>Pleosporales</taxon>
        <taxon>Pleosporineae</taxon>
        <taxon>Pleosporaceae</taxon>
        <taxon>Alternaria</taxon>
        <taxon>Alternaria sect. Alternaria</taxon>
        <taxon>Alternaria alternata complex</taxon>
    </lineage>
</organism>
<dbReference type="EMBL" id="AB525198">
    <property type="protein sequence ID" value="BAI44748.1"/>
    <property type="molecule type" value="Genomic_DNA"/>
</dbReference>
<dbReference type="CDD" id="cd12148">
    <property type="entry name" value="fungal_TF_MHR"/>
    <property type="match status" value="1"/>
</dbReference>
<proteinExistence type="evidence at transcript level"/>
<sequence length="342" mass="37530">MSLLITSLAWGALLDPEVSSASKVALLDAVLEASTLLLRQNGSVRKFLALVAVLCLAEKTGSDNLPALILGSISTAASLSLHLETALRKSCVSNDQAVQTKRAMWILYCIDKSYALRWQTFSLVGDGSLPTTNPPDTALPSEVATTLSLEWLRIRSQYSKICSNILQLGVGAEGEPSENRSNRAVVLSAALEEWYGSVEISQMMLSLEHSDAVHMKLQTSYHYYEARFQLLSISLPDPRSSSPTGSQECREVLRRSIREVITGSNTITSEYLLQDCNHLFIQTLALSMLALDILLESDQGCGKENRALLSIVAGFFARVDIILPQSSIFEEVSNLIEILTYR</sequence>
<accession>C9K7C4</accession>
<feature type="signal peptide" evidence="1">
    <location>
        <begin position="1"/>
        <end position="20"/>
    </location>
</feature>
<feature type="chain" id="PRO_5002997608" description="AM-toxin biosynthesis protein 12">
    <location>
        <begin position="21"/>
        <end position="342"/>
    </location>
</feature>
<name>AMT12_ALTAL</name>
<evidence type="ECO:0000255" key="1"/>
<evidence type="ECO:0000269" key="2">
    <source>
    </source>
</evidence>
<evidence type="ECO:0000269" key="3">
    <source>
    </source>
</evidence>
<evidence type="ECO:0000269" key="4">
    <source>
    </source>
</evidence>
<evidence type="ECO:0000303" key="5">
    <source>
    </source>
</evidence>
<evidence type="ECO:0000303" key="6">
    <source>
    </source>
</evidence>
<evidence type="ECO:0000305" key="7">
    <source>
    </source>
</evidence>
<evidence type="ECO:0000305" key="8">
    <source>
    </source>
</evidence>
<comment type="function">
    <text evidence="2 3 4 6 7 8">Part of the gene clusters that mediate the biosynthesis of AM-toxins, host-selective toxins (HSTs) causing Alternaria blotch on apple, a worldwide distributed disease (Probable). AM-toxins are cyclic depsipeptides containing the 3 residues 2-hydroxy-isovaleric acid (2-HIV), dehydroalanine, L-alanine which are common for all 3 AM-toxins I to III. The fourth precursor is L-alpha-amino-methoxyphenyl-valeric acid (L-Amv) for AM-toxin I, L-alpha-amino-phenyl-valeric acid (L-Apv) for AM-toxin II, and L-alpha-amino-hydroxyphenyl-valeric acid (L-Ahv) for AM-toxin III (Probable). AM-toxins have two target sites for affecting susceptible apple cells; they cause invagination of the plasma membrane and electrolyte loss and chloroplast disorganization (PubMed:22846083). The non-ribosomal peptide synthetase AMT1 contains 4 catalytic modules and is responsible for activation of each residue in AM-toxin (PubMed:10875335). The aldo-keto reductase AMT2 catalyzes the conversion of 2-keto-isovaleric acid (2-KIV) to 2-hydroxy-isovaleric acid (2-HIV), one of the precursor residues incorporated by AMT1 during AM-toxin biosynthesis, by reduction of its ketone to an alcohol (PubMed:15066029). The cytochrome P450 monooxygenase AMT3 and the thioesterase AMT4 are also important for AM-toxin production, but their exact function within the AM-toxin biosynthesis are not known yet (PubMed:17990954). Up to 21 proteins (including AMT1 to AMT4) are predicted to be involved in AM-toxin biosynthesis since their expression ishighly up-regulated in AM-toxin-producing cultures (PubMed:17990954).</text>
</comment>
<comment type="pathway">
    <text evidence="8">Mycotoxin biosynthesis.</text>
</comment>
<comment type="induction">
    <text evidence="4">Expression is up-regulated more than 10 fold in toxin producing cultures.</text>
</comment>
<comment type="miscellaneous">
    <text evidence="4">Gene clusters encoding host-selective toxins (HSTs) are localized on conditionally dispensable chromosomes (CDCs), also called supernumerary chromosomes, where they are present in multiple copies (PubMed:17990954). The CDCs are not essential for saprophytic growth but controls host-selective pathogenicity (PubMed:17990954).</text>
</comment>
<protein>
    <recommendedName>
        <fullName evidence="5">AM-toxin biosynthesis protein 12</fullName>
    </recommendedName>
</protein>